<dbReference type="EMBL" id="L42023">
    <property type="protein sequence ID" value="AAC21717.1"/>
    <property type="molecule type" value="Genomic_DNA"/>
</dbReference>
<dbReference type="PIR" id="G64044">
    <property type="entry name" value="G64044"/>
</dbReference>
<dbReference type="RefSeq" id="NP_438212.1">
    <property type="nucleotide sequence ID" value="NC_000907.1"/>
</dbReference>
<dbReference type="STRING" id="71421.HI_0039"/>
<dbReference type="EnsemblBacteria" id="AAC21717">
    <property type="protein sequence ID" value="AAC21717"/>
    <property type="gene ID" value="HI_0039"/>
</dbReference>
<dbReference type="KEGG" id="hin:HI_0039"/>
<dbReference type="PATRIC" id="fig|71421.8.peg.39"/>
<dbReference type="eggNOG" id="COG2891">
    <property type="taxonomic scope" value="Bacteria"/>
</dbReference>
<dbReference type="HOGENOM" id="CLU_119315_0_0_6"/>
<dbReference type="OrthoDB" id="6647425at2"/>
<dbReference type="PhylomeDB" id="P44476"/>
<dbReference type="BioCyc" id="HINF71421:G1GJ1-39-MONOMER"/>
<dbReference type="Proteomes" id="UP000000579">
    <property type="component" value="Chromosome"/>
</dbReference>
<dbReference type="GO" id="GO:0005886">
    <property type="term" value="C:plasma membrane"/>
    <property type="evidence" value="ECO:0000318"/>
    <property type="project" value="GO_Central"/>
</dbReference>
<dbReference type="GO" id="GO:0008360">
    <property type="term" value="P:regulation of cell shape"/>
    <property type="evidence" value="ECO:0000318"/>
    <property type="project" value="GO_Central"/>
</dbReference>
<dbReference type="InterPro" id="IPR007227">
    <property type="entry name" value="Cell_shape_determining_MreD"/>
</dbReference>
<dbReference type="InterPro" id="IPR026034">
    <property type="entry name" value="MreD_proteobac"/>
</dbReference>
<dbReference type="NCBIfam" id="TIGR03426">
    <property type="entry name" value="shape_MreD"/>
    <property type="match status" value="1"/>
</dbReference>
<dbReference type="PANTHER" id="PTHR37484">
    <property type="entry name" value="ROD SHAPE-DETERMINING PROTEIN MRED"/>
    <property type="match status" value="1"/>
</dbReference>
<dbReference type="PANTHER" id="PTHR37484:SF1">
    <property type="entry name" value="ROD SHAPE-DETERMINING PROTEIN MRED"/>
    <property type="match status" value="1"/>
</dbReference>
<dbReference type="Pfam" id="PF04093">
    <property type="entry name" value="MreD"/>
    <property type="match status" value="1"/>
</dbReference>
<dbReference type="PIRSF" id="PIRSF018472">
    <property type="entry name" value="MreD_proteobac"/>
    <property type="match status" value="1"/>
</dbReference>
<keyword id="KW-0997">Cell inner membrane</keyword>
<keyword id="KW-1003">Cell membrane</keyword>
<keyword id="KW-0133">Cell shape</keyword>
<keyword id="KW-0472">Membrane</keyword>
<keyword id="KW-1185">Reference proteome</keyword>
<keyword id="KW-0812">Transmembrane</keyword>
<keyword id="KW-1133">Transmembrane helix</keyword>
<organism>
    <name type="scientific">Haemophilus influenzae (strain ATCC 51907 / DSM 11121 / KW20 / Rd)</name>
    <dbReference type="NCBI Taxonomy" id="71421"/>
    <lineage>
        <taxon>Bacteria</taxon>
        <taxon>Pseudomonadati</taxon>
        <taxon>Pseudomonadota</taxon>
        <taxon>Gammaproteobacteria</taxon>
        <taxon>Pasteurellales</taxon>
        <taxon>Pasteurellaceae</taxon>
        <taxon>Haemophilus</taxon>
    </lineage>
</organism>
<proteinExistence type="inferred from homology"/>
<protein>
    <recommendedName>
        <fullName>Rod shape-determining protein MreD</fullName>
    </recommendedName>
</protein>
<accession>P44476</accession>
<evidence type="ECO:0000250" key="1"/>
<evidence type="ECO:0000255" key="2"/>
<evidence type="ECO:0000305" key="3"/>
<gene>
    <name type="primary">mreD</name>
    <name type="ordered locus">HI_0039</name>
</gene>
<name>MRED_HAEIN</name>
<sequence>MQTRFILQWFTILSFFVIAFVLELAPWPVGFQMLKPAWLVLVLLYWVLAIPNKVSIGWSFLLGLTWDLILGSTLGVHALVLSTSMYIIAKNYLILRNLSLWFQSLLVVLFVFIIRLLIFLVEFSLHTAFFHWQAILGAFASGLLWPWVFLLMRKIRRKVKLH</sequence>
<feature type="chain" id="PRO_0000062773" description="Rod shape-determining protein MreD">
    <location>
        <begin position="1"/>
        <end position="162"/>
    </location>
</feature>
<feature type="transmembrane region" description="Helical" evidence="2">
    <location>
        <begin position="5"/>
        <end position="25"/>
    </location>
</feature>
<feature type="transmembrane region" description="Helical" evidence="2">
    <location>
        <begin position="30"/>
        <end position="50"/>
    </location>
</feature>
<feature type="transmembrane region" description="Helical" evidence="2">
    <location>
        <begin position="56"/>
        <end position="76"/>
    </location>
</feature>
<feature type="transmembrane region" description="Helical" evidence="2">
    <location>
        <begin position="105"/>
        <end position="125"/>
    </location>
</feature>
<feature type="transmembrane region" description="Helical" evidence="2">
    <location>
        <begin position="132"/>
        <end position="152"/>
    </location>
</feature>
<reference key="1">
    <citation type="journal article" date="1995" name="Science">
        <title>Whole-genome random sequencing and assembly of Haemophilus influenzae Rd.</title>
        <authorList>
            <person name="Fleischmann R.D."/>
            <person name="Adams M.D."/>
            <person name="White O."/>
            <person name="Clayton R.A."/>
            <person name="Kirkness E.F."/>
            <person name="Kerlavage A.R."/>
            <person name="Bult C.J."/>
            <person name="Tomb J.-F."/>
            <person name="Dougherty B.A."/>
            <person name="Merrick J.M."/>
            <person name="McKenney K."/>
            <person name="Sutton G.G."/>
            <person name="FitzHugh W."/>
            <person name="Fields C.A."/>
            <person name="Gocayne J.D."/>
            <person name="Scott J.D."/>
            <person name="Shirley R."/>
            <person name="Liu L.-I."/>
            <person name="Glodek A."/>
            <person name="Kelley J.M."/>
            <person name="Weidman J.F."/>
            <person name="Phillips C.A."/>
            <person name="Spriggs T."/>
            <person name="Hedblom E."/>
            <person name="Cotton M.D."/>
            <person name="Utterback T.R."/>
            <person name="Hanna M.C."/>
            <person name="Nguyen D.T."/>
            <person name="Saudek D.M."/>
            <person name="Brandon R.C."/>
            <person name="Fine L.D."/>
            <person name="Fritchman J.L."/>
            <person name="Fuhrmann J.L."/>
            <person name="Geoghagen N.S.M."/>
            <person name="Gnehm C.L."/>
            <person name="McDonald L.A."/>
            <person name="Small K.V."/>
            <person name="Fraser C.M."/>
            <person name="Smith H.O."/>
            <person name="Venter J.C."/>
        </authorList>
    </citation>
    <scope>NUCLEOTIDE SEQUENCE [LARGE SCALE GENOMIC DNA]</scope>
    <source>
        <strain>ATCC 51907 / DSM 11121 / KW20 / Rd</strain>
    </source>
</reference>
<comment type="function">
    <text evidence="1">Involved in formation of the rod shape of the cell. May also contribute to regulation of formation of penicillin-binding proteins (By similarity).</text>
</comment>
<comment type="subcellular location">
    <subcellularLocation>
        <location evidence="1">Cell inner membrane</location>
        <topology evidence="1">Multi-pass membrane protein</topology>
    </subcellularLocation>
</comment>
<comment type="similarity">
    <text evidence="3">Belongs to the MreD family.</text>
</comment>